<feature type="chain" id="PRO_1000077813" description="UvrABC system protein C">
    <location>
        <begin position="1"/>
        <end position="678"/>
    </location>
</feature>
<feature type="domain" description="GIY-YIG" evidence="1">
    <location>
        <begin position="16"/>
        <end position="95"/>
    </location>
</feature>
<feature type="domain" description="UVR" evidence="1">
    <location>
        <begin position="208"/>
        <end position="243"/>
    </location>
</feature>
<feature type="region of interest" description="Disordered" evidence="2">
    <location>
        <begin position="477"/>
        <end position="508"/>
    </location>
</feature>
<feature type="compositionally biased region" description="Basic and acidic residues" evidence="2">
    <location>
        <begin position="479"/>
        <end position="491"/>
    </location>
</feature>
<reference key="1">
    <citation type="submission" date="2006-12" db="EMBL/GenBank/DDBJ databases">
        <title>Complete sequence of Mycobacterium vanbaalenii PYR-1.</title>
        <authorList>
            <consortium name="US DOE Joint Genome Institute"/>
            <person name="Copeland A."/>
            <person name="Lucas S."/>
            <person name="Lapidus A."/>
            <person name="Barry K."/>
            <person name="Detter J.C."/>
            <person name="Glavina del Rio T."/>
            <person name="Hammon N."/>
            <person name="Israni S."/>
            <person name="Dalin E."/>
            <person name="Tice H."/>
            <person name="Pitluck S."/>
            <person name="Singan V."/>
            <person name="Schmutz J."/>
            <person name="Larimer F."/>
            <person name="Land M."/>
            <person name="Hauser L."/>
            <person name="Kyrpides N."/>
            <person name="Anderson I.J."/>
            <person name="Miller C."/>
            <person name="Richardson P."/>
        </authorList>
    </citation>
    <scope>NUCLEOTIDE SEQUENCE [LARGE SCALE GENOMIC DNA]</scope>
    <source>
        <strain>DSM 7251 / JCM 13017 / BCRC 16820 / KCTC 9966 / NRRL B-24157 / PYR-1</strain>
    </source>
</reference>
<name>UVRC_MYCVP</name>
<gene>
    <name evidence="1" type="primary">uvrC</name>
    <name type="ordered locus">Mvan_2697</name>
</gene>
<sequence>MPDPSTYRPAPGSIPVEPGVYRFRDPHGRVIYVGKAKSLRSRLNSYFADLSGLAPRTRQMVMTAASVEWTVVSTEVEALQLEYNWIKEFDPRFNIRYRDDKSYPVLAVTLNEEYPRLKVYRGPRRKGVRYFGPYSHAWAIRETLDLLTRVFPARTCSNGVFKRHSQIDRPCLLGYIDKCAAPCVGRVSAEEHRRIVLDFCDFLAGKTDRLIREMEQQMNAAAEELDFERAARLRDNIGAMRRAMEKQTVVLGDGTDADVVAFADDELEAAVQVFHVRGGRVRGQRGWVIEKSGEPGESTPAYLVEQFLTQFYGDQAELGGAADEATNPVPRQVLVPVLPDTTEELETWLSQLRGSRVSLRVPQRGDKRALAETVKRNAEQALTQHKLKRAGDFTARSAALQSIQEALGLADAPLRIECVDISHVQGTDVVASLVVFEDGLPRKSDYRHFAIREAAGDGRSDDVASIAEVTRRRFHRHLRDAEAAPEGRPEQGPRASARPEQGPRASARPARFAYPPNLFVVDGGAPQVNAAAAVLDELGISDVAVIGLAKRLEEVWVPNLDGTAPDPVIFPRNSDGLYLLQRVRDEAHRFAISYHRSKRSKRMTASALDSVRGLGEHRRKALVTHFGSLARLKQASVDEITAVPGIGAATARAVLEALGADSGAAPTDIGNDQSRISG</sequence>
<dbReference type="EMBL" id="CP000511">
    <property type="protein sequence ID" value="ABM13504.1"/>
    <property type="molecule type" value="Genomic_DNA"/>
</dbReference>
<dbReference type="RefSeq" id="WP_011779912.1">
    <property type="nucleotide sequence ID" value="NZ_JACKSD010000150.1"/>
</dbReference>
<dbReference type="SMR" id="A1T8K4"/>
<dbReference type="STRING" id="350058.Mvan_2697"/>
<dbReference type="KEGG" id="mva:Mvan_2697"/>
<dbReference type="eggNOG" id="COG0322">
    <property type="taxonomic scope" value="Bacteria"/>
</dbReference>
<dbReference type="HOGENOM" id="CLU_014841_1_1_11"/>
<dbReference type="Proteomes" id="UP000009159">
    <property type="component" value="Chromosome"/>
</dbReference>
<dbReference type="GO" id="GO:0005737">
    <property type="term" value="C:cytoplasm"/>
    <property type="evidence" value="ECO:0007669"/>
    <property type="project" value="UniProtKB-SubCell"/>
</dbReference>
<dbReference type="GO" id="GO:0009380">
    <property type="term" value="C:excinuclease repair complex"/>
    <property type="evidence" value="ECO:0007669"/>
    <property type="project" value="InterPro"/>
</dbReference>
<dbReference type="GO" id="GO:0003677">
    <property type="term" value="F:DNA binding"/>
    <property type="evidence" value="ECO:0007669"/>
    <property type="project" value="UniProtKB-UniRule"/>
</dbReference>
<dbReference type="GO" id="GO:0009381">
    <property type="term" value="F:excinuclease ABC activity"/>
    <property type="evidence" value="ECO:0007669"/>
    <property type="project" value="UniProtKB-UniRule"/>
</dbReference>
<dbReference type="GO" id="GO:0006289">
    <property type="term" value="P:nucleotide-excision repair"/>
    <property type="evidence" value="ECO:0007669"/>
    <property type="project" value="UniProtKB-UniRule"/>
</dbReference>
<dbReference type="GO" id="GO:0009432">
    <property type="term" value="P:SOS response"/>
    <property type="evidence" value="ECO:0007669"/>
    <property type="project" value="UniProtKB-UniRule"/>
</dbReference>
<dbReference type="CDD" id="cd10434">
    <property type="entry name" value="GIY-YIG_UvrC_Cho"/>
    <property type="match status" value="1"/>
</dbReference>
<dbReference type="FunFam" id="3.40.1440.10:FF:000001">
    <property type="entry name" value="UvrABC system protein C"/>
    <property type="match status" value="1"/>
</dbReference>
<dbReference type="Gene3D" id="1.10.150.20">
    <property type="entry name" value="5' to 3' exonuclease, C-terminal subdomain"/>
    <property type="match status" value="1"/>
</dbReference>
<dbReference type="Gene3D" id="3.40.1440.10">
    <property type="entry name" value="GIY-YIG endonuclease"/>
    <property type="match status" value="1"/>
</dbReference>
<dbReference type="Gene3D" id="4.10.860.10">
    <property type="entry name" value="UVR domain"/>
    <property type="match status" value="1"/>
</dbReference>
<dbReference type="Gene3D" id="3.30.420.340">
    <property type="entry name" value="UvrC, RNAse H endonuclease domain"/>
    <property type="match status" value="1"/>
</dbReference>
<dbReference type="HAMAP" id="MF_00203">
    <property type="entry name" value="UvrC"/>
    <property type="match status" value="1"/>
</dbReference>
<dbReference type="InterPro" id="IPR000305">
    <property type="entry name" value="GIY-YIG_endonuc"/>
</dbReference>
<dbReference type="InterPro" id="IPR035901">
    <property type="entry name" value="GIY-YIG_endonuc_sf"/>
</dbReference>
<dbReference type="InterPro" id="IPR047296">
    <property type="entry name" value="GIY-YIG_UvrC_Cho"/>
</dbReference>
<dbReference type="InterPro" id="IPR003583">
    <property type="entry name" value="Hlx-hairpin-Hlx_DNA-bd_motif"/>
</dbReference>
<dbReference type="InterPro" id="IPR010994">
    <property type="entry name" value="RuvA_2-like"/>
</dbReference>
<dbReference type="InterPro" id="IPR001943">
    <property type="entry name" value="UVR_dom"/>
</dbReference>
<dbReference type="InterPro" id="IPR036876">
    <property type="entry name" value="UVR_dom_sf"/>
</dbReference>
<dbReference type="InterPro" id="IPR050066">
    <property type="entry name" value="UvrABC_protein_C"/>
</dbReference>
<dbReference type="InterPro" id="IPR004791">
    <property type="entry name" value="UvrC"/>
</dbReference>
<dbReference type="InterPro" id="IPR001162">
    <property type="entry name" value="UvrC_RNase_H_dom"/>
</dbReference>
<dbReference type="InterPro" id="IPR038476">
    <property type="entry name" value="UvrC_RNase_H_dom_sf"/>
</dbReference>
<dbReference type="NCBIfam" id="NF001824">
    <property type="entry name" value="PRK00558.1-5"/>
    <property type="match status" value="1"/>
</dbReference>
<dbReference type="NCBIfam" id="TIGR00194">
    <property type="entry name" value="uvrC"/>
    <property type="match status" value="1"/>
</dbReference>
<dbReference type="PANTHER" id="PTHR30562:SF1">
    <property type="entry name" value="UVRABC SYSTEM PROTEIN C"/>
    <property type="match status" value="1"/>
</dbReference>
<dbReference type="PANTHER" id="PTHR30562">
    <property type="entry name" value="UVRC/OXIDOREDUCTASE"/>
    <property type="match status" value="1"/>
</dbReference>
<dbReference type="Pfam" id="PF01541">
    <property type="entry name" value="GIY-YIG"/>
    <property type="match status" value="1"/>
</dbReference>
<dbReference type="Pfam" id="PF14520">
    <property type="entry name" value="HHH_5"/>
    <property type="match status" value="1"/>
</dbReference>
<dbReference type="Pfam" id="PF02151">
    <property type="entry name" value="UVR"/>
    <property type="match status" value="1"/>
</dbReference>
<dbReference type="Pfam" id="PF22920">
    <property type="entry name" value="UvrC_RNaseH"/>
    <property type="match status" value="1"/>
</dbReference>
<dbReference type="Pfam" id="PF08459">
    <property type="entry name" value="UvrC_RNaseH_dom"/>
    <property type="match status" value="1"/>
</dbReference>
<dbReference type="SMART" id="SM00465">
    <property type="entry name" value="GIYc"/>
    <property type="match status" value="1"/>
</dbReference>
<dbReference type="SMART" id="SM00278">
    <property type="entry name" value="HhH1"/>
    <property type="match status" value="2"/>
</dbReference>
<dbReference type="SUPFAM" id="SSF46600">
    <property type="entry name" value="C-terminal UvrC-binding domain of UvrB"/>
    <property type="match status" value="1"/>
</dbReference>
<dbReference type="SUPFAM" id="SSF82771">
    <property type="entry name" value="GIY-YIG endonuclease"/>
    <property type="match status" value="1"/>
</dbReference>
<dbReference type="SUPFAM" id="SSF47781">
    <property type="entry name" value="RuvA domain 2-like"/>
    <property type="match status" value="1"/>
</dbReference>
<dbReference type="PROSITE" id="PS50164">
    <property type="entry name" value="GIY_YIG"/>
    <property type="match status" value="1"/>
</dbReference>
<dbReference type="PROSITE" id="PS50151">
    <property type="entry name" value="UVR"/>
    <property type="match status" value="1"/>
</dbReference>
<dbReference type="PROSITE" id="PS50165">
    <property type="entry name" value="UVRC"/>
    <property type="match status" value="1"/>
</dbReference>
<proteinExistence type="inferred from homology"/>
<accession>A1T8K4</accession>
<keyword id="KW-0963">Cytoplasm</keyword>
<keyword id="KW-0227">DNA damage</keyword>
<keyword id="KW-0228">DNA excision</keyword>
<keyword id="KW-0234">DNA repair</keyword>
<keyword id="KW-0267">Excision nuclease</keyword>
<keyword id="KW-0742">SOS response</keyword>
<evidence type="ECO:0000255" key="1">
    <source>
        <dbReference type="HAMAP-Rule" id="MF_00203"/>
    </source>
</evidence>
<evidence type="ECO:0000256" key="2">
    <source>
        <dbReference type="SAM" id="MobiDB-lite"/>
    </source>
</evidence>
<comment type="function">
    <text evidence="1">The UvrABC repair system catalyzes the recognition and processing of DNA lesions. UvrC both incises the 5' and 3' sides of the lesion. The N-terminal half is responsible for the 3' incision and the C-terminal half is responsible for the 5' incision.</text>
</comment>
<comment type="subunit">
    <text evidence="1">Interacts with UvrB in an incision complex.</text>
</comment>
<comment type="subcellular location">
    <subcellularLocation>
        <location evidence="1">Cytoplasm</location>
    </subcellularLocation>
</comment>
<comment type="similarity">
    <text evidence="1">Belongs to the UvrC family.</text>
</comment>
<protein>
    <recommendedName>
        <fullName evidence="1">UvrABC system protein C</fullName>
        <shortName evidence="1">Protein UvrC</shortName>
    </recommendedName>
    <alternativeName>
        <fullName evidence="1">Excinuclease ABC subunit C</fullName>
    </alternativeName>
</protein>
<organism>
    <name type="scientific">Mycolicibacterium vanbaalenii (strain DSM 7251 / JCM 13017 / BCRC 16820 / KCTC 9966 / NRRL B-24157 / PYR-1)</name>
    <name type="common">Mycobacterium vanbaalenii</name>
    <dbReference type="NCBI Taxonomy" id="350058"/>
    <lineage>
        <taxon>Bacteria</taxon>
        <taxon>Bacillati</taxon>
        <taxon>Actinomycetota</taxon>
        <taxon>Actinomycetes</taxon>
        <taxon>Mycobacteriales</taxon>
        <taxon>Mycobacteriaceae</taxon>
        <taxon>Mycolicibacterium</taxon>
    </lineage>
</organism>